<protein>
    <recommendedName>
        <fullName>Ovomucoid</fullName>
    </recommendedName>
</protein>
<proteinExistence type="evidence at protein level"/>
<evidence type="ECO:0000255" key="1">
    <source>
        <dbReference type="PROSITE-ProRule" id="PRU00798"/>
    </source>
</evidence>
<feature type="chain" id="PRO_0000073065" description="Ovomucoid">
    <location>
        <begin position="1" status="less than"/>
        <end position="53" status="greater than"/>
    </location>
</feature>
<feature type="domain" description="Kazal-like" evidence="1">
    <location>
        <begin position="3"/>
        <end position="53"/>
    </location>
</feature>
<feature type="site" description="Reactive bond 3">
    <location>
        <begin position="15"/>
        <end position="16"/>
    </location>
</feature>
<feature type="glycosylation site" description="N-linked (GlcNAc...) asparagine">
    <location>
        <position position="42"/>
    </location>
</feature>
<feature type="disulfide bond">
    <location>
        <begin position="5"/>
        <end position="35"/>
    </location>
</feature>
<feature type="disulfide bond">
    <location>
        <begin position="13"/>
        <end position="32"/>
    </location>
</feature>
<feature type="disulfide bond">
    <location>
        <begin position="21"/>
        <end position="53"/>
    </location>
</feature>
<feature type="non-terminal residue">
    <location>
        <position position="1"/>
    </location>
</feature>
<feature type="non-terminal residue">
    <location>
        <position position="53"/>
    </location>
</feature>
<dbReference type="PIR" id="I31438">
    <property type="entry name" value="I31438"/>
</dbReference>
<dbReference type="BMRB" id="P05601"/>
<dbReference type="SMR" id="P05601"/>
<dbReference type="GO" id="GO:0005576">
    <property type="term" value="C:extracellular region"/>
    <property type="evidence" value="ECO:0007669"/>
    <property type="project" value="UniProtKB-SubCell"/>
</dbReference>
<dbReference type="GO" id="GO:0004867">
    <property type="term" value="F:serine-type endopeptidase inhibitor activity"/>
    <property type="evidence" value="ECO:0007669"/>
    <property type="project" value="UniProtKB-KW"/>
</dbReference>
<dbReference type="CDD" id="cd00104">
    <property type="entry name" value="KAZAL_FS"/>
    <property type="match status" value="1"/>
</dbReference>
<dbReference type="FunFam" id="3.30.60.30:FF:000037">
    <property type="entry name" value="Ovomucoid"/>
    <property type="match status" value="1"/>
</dbReference>
<dbReference type="Gene3D" id="3.30.60.30">
    <property type="match status" value="1"/>
</dbReference>
<dbReference type="InterPro" id="IPR051597">
    <property type="entry name" value="Bifunctional_prot_inhibitor"/>
</dbReference>
<dbReference type="InterPro" id="IPR002350">
    <property type="entry name" value="Kazal_dom"/>
</dbReference>
<dbReference type="InterPro" id="IPR036058">
    <property type="entry name" value="Kazal_dom_sf"/>
</dbReference>
<dbReference type="InterPro" id="IPR001239">
    <property type="entry name" value="Prot_inh_Kazal-m"/>
</dbReference>
<dbReference type="PANTHER" id="PTHR47729:SF1">
    <property type="entry name" value="OVOMUCOID-LIKE-RELATED"/>
    <property type="match status" value="1"/>
</dbReference>
<dbReference type="PANTHER" id="PTHR47729">
    <property type="entry name" value="SERINE PEPTIDASE INHIBITOR, KAZAL TYPE 2, TANDEM DUPLICATE 1-RELATED"/>
    <property type="match status" value="1"/>
</dbReference>
<dbReference type="Pfam" id="PF00050">
    <property type="entry name" value="Kazal_1"/>
    <property type="match status" value="1"/>
</dbReference>
<dbReference type="PRINTS" id="PR00290">
    <property type="entry name" value="KAZALINHBTR"/>
</dbReference>
<dbReference type="SMART" id="SM00280">
    <property type="entry name" value="KAZAL"/>
    <property type="match status" value="1"/>
</dbReference>
<dbReference type="SUPFAM" id="SSF100895">
    <property type="entry name" value="Kazal-type serine protease inhibitors"/>
    <property type="match status" value="1"/>
</dbReference>
<dbReference type="PROSITE" id="PS00282">
    <property type="entry name" value="KAZAL_1"/>
    <property type="match status" value="1"/>
</dbReference>
<dbReference type="PROSITE" id="PS51465">
    <property type="entry name" value="KAZAL_2"/>
    <property type="match status" value="1"/>
</dbReference>
<sequence>VSVDCSDYPMPACTMEYRPVCGSDNKTYGNKCNFCNAVVESNGTLTLSHFGKC</sequence>
<name>IOVO_ARBTO</name>
<reference key="1">
    <citation type="journal article" date="1987" name="Biochemistry">
        <title>Ovomucoid third domains from 100 avian species: isolation, sequences, and hypervariability of enzyme-inhibitor contact residues.</title>
        <authorList>
            <person name="Laskowski M. Jr."/>
            <person name="Kato I."/>
            <person name="Ardelt W."/>
            <person name="Cook J."/>
            <person name="Denton A."/>
            <person name="Empie M.W."/>
            <person name="Kohr W.J."/>
            <person name="Park S.J."/>
            <person name="Parks K."/>
            <person name="Schatzley B.L."/>
            <person name="Schoenberger O.L."/>
            <person name="Tashiro M."/>
            <person name="Vichot G."/>
            <person name="Whatley H.E."/>
            <person name="Wieczorek A."/>
            <person name="Wieczorek M."/>
        </authorList>
    </citation>
    <scope>PROTEIN SEQUENCE</scope>
</reference>
<accession>P05601</accession>
<organism>
    <name type="scientific">Arborophila torqueola</name>
    <name type="common">Hill partridge</name>
    <name type="synonym">Perdix torqueola</name>
    <dbReference type="NCBI Taxonomy" id="9105"/>
    <lineage>
        <taxon>Eukaryota</taxon>
        <taxon>Metazoa</taxon>
        <taxon>Chordata</taxon>
        <taxon>Craniata</taxon>
        <taxon>Vertebrata</taxon>
        <taxon>Euteleostomi</taxon>
        <taxon>Archelosauria</taxon>
        <taxon>Archosauria</taxon>
        <taxon>Dinosauria</taxon>
        <taxon>Saurischia</taxon>
        <taxon>Theropoda</taxon>
        <taxon>Coelurosauria</taxon>
        <taxon>Aves</taxon>
        <taxon>Neognathae</taxon>
        <taxon>Galloanserae</taxon>
        <taxon>Galliformes</taxon>
        <taxon>Phasianidae</taxon>
        <taxon>Perdicinae</taxon>
        <taxon>Arborophila</taxon>
    </lineage>
</organism>
<comment type="subcellular location">
    <subcellularLocation>
        <location>Secreted</location>
    </subcellularLocation>
</comment>
<comment type="domain">
    <text>Avian ovomucoid consists of three homologous, tandem Kazal family inhibitory domains.</text>
</comment>
<keyword id="KW-0903">Direct protein sequencing</keyword>
<keyword id="KW-1015">Disulfide bond</keyword>
<keyword id="KW-0325">Glycoprotein</keyword>
<keyword id="KW-0646">Protease inhibitor</keyword>
<keyword id="KW-0677">Repeat</keyword>
<keyword id="KW-0964">Secreted</keyword>
<keyword id="KW-0722">Serine protease inhibitor</keyword>